<sequence>MPKHEFSVDMTCEGCSNAVSRVLNKLGGVEFDIDLPNKKVCINSEHSVDILLETLEKTGKAVSYLGPK</sequence>
<proteinExistence type="inferred from homology"/>
<reference key="1">
    <citation type="journal article" date="1999" name="Genomics">
        <title>The copper chaperone Atox1 in canine copper toxicosis in Bedlington terriers.</title>
        <authorList>
            <person name="Nanji M.S."/>
            <person name="Cox D.W."/>
        </authorList>
    </citation>
    <scope>NUCLEOTIDE SEQUENCE [MRNA]</scope>
</reference>
<reference key="2">
    <citation type="journal article" date="2001" name="Cytogenet. Cell Genet.">
        <title>Characterization and chromosomal localization of five canine ATOX1 pseudogenes.</title>
        <authorList>
            <person name="van de Sluis B."/>
            <person name="Nanji M.S."/>
            <person name="Breen M."/>
            <person name="Pearson P.L."/>
            <person name="van Oost B.A."/>
            <person name="Cox D.W."/>
            <person name="Wijmenga C."/>
        </authorList>
    </citation>
    <scope>NUCLEOTIDE SEQUENCE [GENOMIC DNA]</scope>
</reference>
<feature type="chain" id="PRO_0000212536" description="Copper transport protein ATOX1">
    <location>
        <begin position="1"/>
        <end position="68"/>
    </location>
</feature>
<feature type="domain" description="HMA" evidence="4">
    <location>
        <begin position="1"/>
        <end position="63"/>
    </location>
</feature>
<feature type="binding site" evidence="2 4">
    <location>
        <position position="12"/>
    </location>
    <ligand>
        <name>Cu cation</name>
        <dbReference type="ChEBI" id="CHEBI:23378"/>
    </ligand>
</feature>
<feature type="binding site" evidence="2 4">
    <location>
        <position position="15"/>
    </location>
    <ligand>
        <name>Cu cation</name>
        <dbReference type="ChEBI" id="CHEBI:23378"/>
    </ligand>
</feature>
<feature type="modified residue" description="Phosphoserine" evidence="2">
    <location>
        <position position="47"/>
    </location>
</feature>
<feature type="modified residue" description="N6-acetyllysine" evidence="3">
    <location>
        <position position="60"/>
    </location>
</feature>
<keyword id="KW-0007">Acetylation</keyword>
<keyword id="KW-0143">Chaperone</keyword>
<keyword id="KW-0186">Copper</keyword>
<keyword id="KW-0187">Copper transport</keyword>
<keyword id="KW-0406">Ion transport</keyword>
<keyword id="KW-0479">Metal-binding</keyword>
<keyword id="KW-0597">Phosphoprotein</keyword>
<keyword id="KW-1185">Reference proteome</keyword>
<keyword id="KW-0813">Transport</keyword>
<accession>Q9TT99</accession>
<protein>
    <recommendedName>
        <fullName evidence="2">Copper transport protein ATOX1</fullName>
    </recommendedName>
    <alternativeName>
        <fullName>Metal transport protein ATX1</fullName>
    </alternativeName>
</protein>
<dbReference type="EMBL" id="AF179715">
    <property type="protein sequence ID" value="AAF01286.1"/>
    <property type="molecule type" value="mRNA"/>
</dbReference>
<dbReference type="EMBL" id="AF286878">
    <property type="protein sequence ID" value="AAL03945.1"/>
    <property type="molecule type" value="Genomic_DNA"/>
</dbReference>
<dbReference type="EMBL" id="AF286877">
    <property type="protein sequence ID" value="AAL03945.1"/>
    <property type="status" value="JOINED"/>
    <property type="molecule type" value="Genomic_DNA"/>
</dbReference>
<dbReference type="RefSeq" id="NP_001003119.1">
    <property type="nucleotide sequence ID" value="NM_001003119.1"/>
</dbReference>
<dbReference type="RefSeq" id="XP_005618921.1">
    <property type="nucleotide sequence ID" value="XM_005618864.2"/>
</dbReference>
<dbReference type="RefSeq" id="XP_038518138.1">
    <property type="nucleotide sequence ID" value="XM_038662210.1"/>
</dbReference>
<dbReference type="SMR" id="Q9TT99"/>
<dbReference type="FunCoup" id="Q9TT99">
    <property type="interactions" value="1333"/>
</dbReference>
<dbReference type="STRING" id="9615.ENSCAFP00000026329"/>
<dbReference type="PaxDb" id="9612-ENSCAFP00000041904"/>
<dbReference type="Ensembl" id="ENSCAFT00000028311.4">
    <property type="protein sequence ID" value="ENSCAFP00000026329.3"/>
    <property type="gene ID" value="ENSCAFG00000017846.5"/>
</dbReference>
<dbReference type="Ensembl" id="ENSCAFT00030007267.1">
    <property type="protein sequence ID" value="ENSCAFP00030006371.1"/>
    <property type="gene ID" value="ENSCAFG00030003936.1"/>
</dbReference>
<dbReference type="Ensembl" id="ENSCAFT00040013498.1">
    <property type="protein sequence ID" value="ENSCAFP00040011699.1"/>
    <property type="gene ID" value="ENSCAFG00040007251.1"/>
</dbReference>
<dbReference type="Ensembl" id="ENSCAFT00845009205.1">
    <property type="protein sequence ID" value="ENSCAFP00845007240.1"/>
    <property type="gene ID" value="ENSCAFG00845005141.1"/>
</dbReference>
<dbReference type="GeneID" id="403713"/>
<dbReference type="KEGG" id="cfa:403713"/>
<dbReference type="CTD" id="475"/>
<dbReference type="VEuPathDB" id="HostDB:ENSCAFG00845005141"/>
<dbReference type="VGNC" id="VGNC:38237">
    <property type="gene designation" value="ATOX1"/>
</dbReference>
<dbReference type="eggNOG" id="KOG1603">
    <property type="taxonomic scope" value="Eukaryota"/>
</dbReference>
<dbReference type="GeneTree" id="ENSGT00940000162517"/>
<dbReference type="InParanoid" id="Q9TT99"/>
<dbReference type="OMA" id="MTHTYKF"/>
<dbReference type="OrthoDB" id="689350at2759"/>
<dbReference type="TreeFam" id="TF352589"/>
<dbReference type="Reactome" id="R-CFA-6803544">
    <property type="pathway name" value="Ion influx/efflux at host-pathogen interface"/>
</dbReference>
<dbReference type="Proteomes" id="UP000002254">
    <property type="component" value="Chromosome 4"/>
</dbReference>
<dbReference type="Proteomes" id="UP000694429">
    <property type="component" value="Chromosome 4"/>
</dbReference>
<dbReference type="Proteomes" id="UP000694542">
    <property type="component" value="Chromosome 4"/>
</dbReference>
<dbReference type="Proteomes" id="UP000805418">
    <property type="component" value="Chromosome 4"/>
</dbReference>
<dbReference type="Bgee" id="ENSCAFG00000017846">
    <property type="expression patterns" value="Expressed in placenta and 48 other cell types or tissues"/>
</dbReference>
<dbReference type="GO" id="GO:0005829">
    <property type="term" value="C:cytosol"/>
    <property type="evidence" value="ECO:0000318"/>
    <property type="project" value="GO_Central"/>
</dbReference>
<dbReference type="GO" id="GO:0016531">
    <property type="term" value="F:copper chaperone activity"/>
    <property type="evidence" value="ECO:0000318"/>
    <property type="project" value="GO_Central"/>
</dbReference>
<dbReference type="GO" id="GO:0046872">
    <property type="term" value="F:metal ion binding"/>
    <property type="evidence" value="ECO:0007669"/>
    <property type="project" value="UniProtKB-KW"/>
</dbReference>
<dbReference type="GO" id="GO:0006825">
    <property type="term" value="P:copper ion transport"/>
    <property type="evidence" value="ECO:0000318"/>
    <property type="project" value="GO_Central"/>
</dbReference>
<dbReference type="CDD" id="cd00371">
    <property type="entry name" value="HMA"/>
    <property type="match status" value="1"/>
</dbReference>
<dbReference type="FunFam" id="3.30.70.100:FF:000008">
    <property type="entry name" value="Copper transport protein ATOX1"/>
    <property type="match status" value="1"/>
</dbReference>
<dbReference type="Gene3D" id="3.30.70.100">
    <property type="match status" value="1"/>
</dbReference>
<dbReference type="InterPro" id="IPR051881">
    <property type="entry name" value="Copper_transport_ATOX1-like"/>
</dbReference>
<dbReference type="InterPro" id="IPR017969">
    <property type="entry name" value="Heavy-metal-associated_CS"/>
</dbReference>
<dbReference type="InterPro" id="IPR006121">
    <property type="entry name" value="HMA_dom"/>
</dbReference>
<dbReference type="InterPro" id="IPR036163">
    <property type="entry name" value="HMA_dom_sf"/>
</dbReference>
<dbReference type="PANTHER" id="PTHR46365">
    <property type="entry name" value="COPPER TRANSPORT PROTEIN ATOX1"/>
    <property type="match status" value="1"/>
</dbReference>
<dbReference type="PANTHER" id="PTHR46365:SF1">
    <property type="entry name" value="COPPER TRANSPORT PROTEIN ATOX1"/>
    <property type="match status" value="1"/>
</dbReference>
<dbReference type="Pfam" id="PF00403">
    <property type="entry name" value="HMA"/>
    <property type="match status" value="1"/>
</dbReference>
<dbReference type="SUPFAM" id="SSF55008">
    <property type="entry name" value="HMA, heavy metal-associated domain"/>
    <property type="match status" value="1"/>
</dbReference>
<dbReference type="PROSITE" id="PS01047">
    <property type="entry name" value="HMA_1"/>
    <property type="match status" value="1"/>
</dbReference>
<dbReference type="PROSITE" id="PS50846">
    <property type="entry name" value="HMA_2"/>
    <property type="match status" value="1"/>
</dbReference>
<name>ATOX1_CANLF</name>
<gene>
    <name evidence="2" type="primary">ATOX1</name>
</gene>
<evidence type="ECO:0000250" key="1"/>
<evidence type="ECO:0000250" key="2">
    <source>
        <dbReference type="UniProtKB" id="O00244"/>
    </source>
</evidence>
<evidence type="ECO:0000250" key="3">
    <source>
        <dbReference type="UniProtKB" id="O08997"/>
    </source>
</evidence>
<evidence type="ECO:0000255" key="4">
    <source>
        <dbReference type="PROSITE-ProRule" id="PRU00280"/>
    </source>
</evidence>
<evidence type="ECO:0000305" key="5"/>
<organism>
    <name type="scientific">Canis lupus familiaris</name>
    <name type="common">Dog</name>
    <name type="synonym">Canis familiaris</name>
    <dbReference type="NCBI Taxonomy" id="9615"/>
    <lineage>
        <taxon>Eukaryota</taxon>
        <taxon>Metazoa</taxon>
        <taxon>Chordata</taxon>
        <taxon>Craniata</taxon>
        <taxon>Vertebrata</taxon>
        <taxon>Euteleostomi</taxon>
        <taxon>Mammalia</taxon>
        <taxon>Eutheria</taxon>
        <taxon>Laurasiatheria</taxon>
        <taxon>Carnivora</taxon>
        <taxon>Caniformia</taxon>
        <taxon>Canidae</taxon>
        <taxon>Canis</taxon>
    </lineage>
</organism>
<comment type="function">
    <text evidence="1">Binds and deliver cytosolic copper to the copper ATPase proteins. May be important in cellular antioxidant defense (By similarity).</text>
</comment>
<comment type="subunit">
    <text evidence="2">Homodimer. Interacts with ATP7B. Interacts with ATP7A. Interacts (via dimer form) with SLC31A1 (via C-terminal domain); this interaction improves ATOX1 stability and controls intracellular Cu(I) levels.</text>
</comment>
<comment type="domain">
    <text evidence="2">The heavy-metal-associated domain (HMA) coordinates a Cu(+) ion via the cysteine residues within the CXXC motif. The transfer of Cu(+) ion from ATOX1 to ATP7A involves the formation of a three-coordinate Cu(+)-bridged heterodimer where the metal is shared between the two metal binding sites of ATOX1 and ATP7A. The Cu(+) ion appears to switch between two coordination modes, forming two links with one protein and one with the other. Cisplatin, a chemotherapeutic drug, can bind the CXXC motif and hinder the release of Cu(+) ion.</text>
</comment>
<comment type="similarity">
    <text evidence="5">Belongs to the ATX1 family.</text>
</comment>